<proteinExistence type="inferred from homology"/>
<gene>
    <name evidence="1" type="primary">atpA</name>
    <name type="ordered locus">Smlt4113</name>
</gene>
<reference key="1">
    <citation type="journal article" date="2008" name="Genome Biol.">
        <title>The complete genome, comparative and functional analysis of Stenotrophomonas maltophilia reveals an organism heavily shielded by drug resistance determinants.</title>
        <authorList>
            <person name="Crossman L.C."/>
            <person name="Gould V.C."/>
            <person name="Dow J.M."/>
            <person name="Vernikos G.S."/>
            <person name="Okazaki A."/>
            <person name="Sebaihia M."/>
            <person name="Saunders D."/>
            <person name="Arrowsmith C."/>
            <person name="Carver T."/>
            <person name="Peters N."/>
            <person name="Adlem E."/>
            <person name="Kerhornou A."/>
            <person name="Lord A."/>
            <person name="Murphy L."/>
            <person name="Seeger K."/>
            <person name="Squares R."/>
            <person name="Rutter S."/>
            <person name="Quail M.A."/>
            <person name="Rajandream M.A."/>
            <person name="Harris D."/>
            <person name="Churcher C."/>
            <person name="Bentley S.D."/>
            <person name="Parkhill J."/>
            <person name="Thomson N.R."/>
            <person name="Avison M.B."/>
        </authorList>
    </citation>
    <scope>NUCLEOTIDE SEQUENCE [LARGE SCALE GENOMIC DNA]</scope>
    <source>
        <strain>K279a</strain>
    </source>
</reference>
<name>ATPA_STRMK</name>
<protein>
    <recommendedName>
        <fullName evidence="1">ATP synthase subunit alpha</fullName>
        <ecNumber evidence="1">7.1.2.2</ecNumber>
    </recommendedName>
    <alternativeName>
        <fullName evidence="1">ATP synthase F1 sector subunit alpha</fullName>
    </alternativeName>
    <alternativeName>
        <fullName evidence="1">F-ATPase subunit alpha</fullName>
    </alternativeName>
</protein>
<comment type="function">
    <text evidence="1">Produces ATP from ADP in the presence of a proton gradient across the membrane. The alpha chain is a regulatory subunit.</text>
</comment>
<comment type="catalytic activity">
    <reaction evidence="1">
        <text>ATP + H2O + 4 H(+)(in) = ADP + phosphate + 5 H(+)(out)</text>
        <dbReference type="Rhea" id="RHEA:57720"/>
        <dbReference type="ChEBI" id="CHEBI:15377"/>
        <dbReference type="ChEBI" id="CHEBI:15378"/>
        <dbReference type="ChEBI" id="CHEBI:30616"/>
        <dbReference type="ChEBI" id="CHEBI:43474"/>
        <dbReference type="ChEBI" id="CHEBI:456216"/>
        <dbReference type="EC" id="7.1.2.2"/>
    </reaction>
</comment>
<comment type="subunit">
    <text evidence="1">F-type ATPases have 2 components, CF(1) - the catalytic core - and CF(0) - the membrane proton channel. CF(1) has five subunits: alpha(3), beta(3), gamma(1), delta(1), epsilon(1). CF(0) has three main subunits: a(1), b(2) and c(9-12). The alpha and beta chains form an alternating ring which encloses part of the gamma chain. CF(1) is attached to CF(0) by a central stalk formed by the gamma and epsilon chains, while a peripheral stalk is formed by the delta and b chains.</text>
</comment>
<comment type="subcellular location">
    <subcellularLocation>
        <location evidence="1">Cell membrane</location>
        <topology evidence="1">Peripheral membrane protein</topology>
    </subcellularLocation>
</comment>
<comment type="similarity">
    <text evidence="1">Belongs to the ATPase alpha/beta chains family.</text>
</comment>
<sequence>MATTLNPSEISELIKNRIEKVKLAAESRNEGTVTSVSDGIVRIFGLADVMQGEMIELPNNTFALALNLERDSVGAVVLGDYEHLREGDVAKTTGRILEVPVGPELLGRVVNALGEPIDGKGPLGTDLTAPVERVAPGVIWRKSVDQPVQTGYKSVDSMIPIGRGQRELIIGDRQTGKTAMAIDAVINQKGTGIKCVYVAIGQKASTIANIVRKLEENGALAHTIVVAATASESAAMQYISAYSGCTMGEYFMDRGEDALIVYDDLSKQAVAYRQISLLLKRPPGREAYPGDVFYLHSRLLERAARVSEEYVEKFTEGKVTGKTGSLTALPIIETQAGDVSAFVPTNVISITDGQIFLETDLFNAGIRPAVNAGISVSRVGGSAQTKIIKKLSGGIRISLAQYRELAAFAQFASDLDEATRKQLERGQRVTELMKQKQYAPMSIANQALSIYAVNEGYLDDVPVNKLLAFEEGLHAHFANTQGELVSKVNATGGWDNDIEGAFKKGIAEFKTTGSW</sequence>
<keyword id="KW-0066">ATP synthesis</keyword>
<keyword id="KW-0067">ATP-binding</keyword>
<keyword id="KW-1003">Cell membrane</keyword>
<keyword id="KW-0139">CF(1)</keyword>
<keyword id="KW-0375">Hydrogen ion transport</keyword>
<keyword id="KW-0406">Ion transport</keyword>
<keyword id="KW-0472">Membrane</keyword>
<keyword id="KW-0547">Nucleotide-binding</keyword>
<keyword id="KW-1185">Reference proteome</keyword>
<keyword id="KW-1278">Translocase</keyword>
<keyword id="KW-0813">Transport</keyword>
<dbReference type="EC" id="7.1.2.2" evidence="1"/>
<dbReference type="EMBL" id="AM743169">
    <property type="protein sequence ID" value="CAQ47504.1"/>
    <property type="molecule type" value="Genomic_DNA"/>
</dbReference>
<dbReference type="RefSeq" id="WP_005411130.1">
    <property type="nucleotide sequence ID" value="NC_010943.1"/>
</dbReference>
<dbReference type="SMR" id="B2FHZ0"/>
<dbReference type="EnsemblBacteria" id="CAQ47504">
    <property type="protein sequence ID" value="CAQ47504"/>
    <property type="gene ID" value="Smlt4113"/>
</dbReference>
<dbReference type="GeneID" id="93835079"/>
<dbReference type="KEGG" id="sml:Smlt4113"/>
<dbReference type="eggNOG" id="COG0056">
    <property type="taxonomic scope" value="Bacteria"/>
</dbReference>
<dbReference type="HOGENOM" id="CLU_010091_2_1_6"/>
<dbReference type="Proteomes" id="UP000008840">
    <property type="component" value="Chromosome"/>
</dbReference>
<dbReference type="GO" id="GO:0005886">
    <property type="term" value="C:plasma membrane"/>
    <property type="evidence" value="ECO:0007669"/>
    <property type="project" value="UniProtKB-SubCell"/>
</dbReference>
<dbReference type="GO" id="GO:0045259">
    <property type="term" value="C:proton-transporting ATP synthase complex"/>
    <property type="evidence" value="ECO:0007669"/>
    <property type="project" value="UniProtKB-KW"/>
</dbReference>
<dbReference type="GO" id="GO:0043531">
    <property type="term" value="F:ADP binding"/>
    <property type="evidence" value="ECO:0007669"/>
    <property type="project" value="TreeGrafter"/>
</dbReference>
<dbReference type="GO" id="GO:0005524">
    <property type="term" value="F:ATP binding"/>
    <property type="evidence" value="ECO:0007669"/>
    <property type="project" value="UniProtKB-UniRule"/>
</dbReference>
<dbReference type="GO" id="GO:0046933">
    <property type="term" value="F:proton-transporting ATP synthase activity, rotational mechanism"/>
    <property type="evidence" value="ECO:0007669"/>
    <property type="project" value="UniProtKB-UniRule"/>
</dbReference>
<dbReference type="CDD" id="cd18113">
    <property type="entry name" value="ATP-synt_F1_alpha_C"/>
    <property type="match status" value="1"/>
</dbReference>
<dbReference type="CDD" id="cd18116">
    <property type="entry name" value="ATP-synt_F1_alpha_N"/>
    <property type="match status" value="1"/>
</dbReference>
<dbReference type="CDD" id="cd01132">
    <property type="entry name" value="F1-ATPase_alpha_CD"/>
    <property type="match status" value="1"/>
</dbReference>
<dbReference type="FunFam" id="1.20.150.20:FF:000001">
    <property type="entry name" value="ATP synthase subunit alpha"/>
    <property type="match status" value="1"/>
</dbReference>
<dbReference type="FunFam" id="2.40.30.20:FF:000001">
    <property type="entry name" value="ATP synthase subunit alpha"/>
    <property type="match status" value="1"/>
</dbReference>
<dbReference type="FunFam" id="3.40.50.300:FF:000002">
    <property type="entry name" value="ATP synthase subunit alpha"/>
    <property type="match status" value="1"/>
</dbReference>
<dbReference type="Gene3D" id="2.40.30.20">
    <property type="match status" value="1"/>
</dbReference>
<dbReference type="Gene3D" id="1.20.150.20">
    <property type="entry name" value="ATP synthase alpha/beta chain, C-terminal domain"/>
    <property type="match status" value="1"/>
</dbReference>
<dbReference type="Gene3D" id="3.40.50.300">
    <property type="entry name" value="P-loop containing nucleotide triphosphate hydrolases"/>
    <property type="match status" value="1"/>
</dbReference>
<dbReference type="HAMAP" id="MF_01346">
    <property type="entry name" value="ATP_synth_alpha_bact"/>
    <property type="match status" value="1"/>
</dbReference>
<dbReference type="InterPro" id="IPR023366">
    <property type="entry name" value="ATP_synth_asu-like_sf"/>
</dbReference>
<dbReference type="InterPro" id="IPR000793">
    <property type="entry name" value="ATP_synth_asu_C"/>
</dbReference>
<dbReference type="InterPro" id="IPR038376">
    <property type="entry name" value="ATP_synth_asu_C_sf"/>
</dbReference>
<dbReference type="InterPro" id="IPR033732">
    <property type="entry name" value="ATP_synth_F1_a_nt-bd_dom"/>
</dbReference>
<dbReference type="InterPro" id="IPR005294">
    <property type="entry name" value="ATP_synth_F1_asu"/>
</dbReference>
<dbReference type="InterPro" id="IPR020003">
    <property type="entry name" value="ATPase_a/bsu_AS"/>
</dbReference>
<dbReference type="InterPro" id="IPR004100">
    <property type="entry name" value="ATPase_F1/V1/A1_a/bsu_N"/>
</dbReference>
<dbReference type="InterPro" id="IPR036121">
    <property type="entry name" value="ATPase_F1/V1/A1_a/bsu_N_sf"/>
</dbReference>
<dbReference type="InterPro" id="IPR000194">
    <property type="entry name" value="ATPase_F1/V1/A1_a/bsu_nucl-bd"/>
</dbReference>
<dbReference type="InterPro" id="IPR027417">
    <property type="entry name" value="P-loop_NTPase"/>
</dbReference>
<dbReference type="NCBIfam" id="TIGR00962">
    <property type="entry name" value="atpA"/>
    <property type="match status" value="1"/>
</dbReference>
<dbReference type="NCBIfam" id="NF009884">
    <property type="entry name" value="PRK13343.1"/>
    <property type="match status" value="1"/>
</dbReference>
<dbReference type="PANTHER" id="PTHR48082">
    <property type="entry name" value="ATP SYNTHASE SUBUNIT ALPHA, MITOCHONDRIAL"/>
    <property type="match status" value="1"/>
</dbReference>
<dbReference type="PANTHER" id="PTHR48082:SF2">
    <property type="entry name" value="ATP SYNTHASE SUBUNIT ALPHA, MITOCHONDRIAL"/>
    <property type="match status" value="1"/>
</dbReference>
<dbReference type="Pfam" id="PF00006">
    <property type="entry name" value="ATP-synt_ab"/>
    <property type="match status" value="1"/>
</dbReference>
<dbReference type="Pfam" id="PF00306">
    <property type="entry name" value="ATP-synt_ab_C"/>
    <property type="match status" value="1"/>
</dbReference>
<dbReference type="Pfam" id="PF02874">
    <property type="entry name" value="ATP-synt_ab_N"/>
    <property type="match status" value="1"/>
</dbReference>
<dbReference type="SUPFAM" id="SSF47917">
    <property type="entry name" value="C-terminal domain of alpha and beta subunits of F1 ATP synthase"/>
    <property type="match status" value="1"/>
</dbReference>
<dbReference type="SUPFAM" id="SSF50615">
    <property type="entry name" value="N-terminal domain of alpha and beta subunits of F1 ATP synthase"/>
    <property type="match status" value="1"/>
</dbReference>
<dbReference type="SUPFAM" id="SSF52540">
    <property type="entry name" value="P-loop containing nucleoside triphosphate hydrolases"/>
    <property type="match status" value="1"/>
</dbReference>
<dbReference type="PROSITE" id="PS00152">
    <property type="entry name" value="ATPASE_ALPHA_BETA"/>
    <property type="match status" value="1"/>
</dbReference>
<organism>
    <name type="scientific">Stenotrophomonas maltophilia (strain K279a)</name>
    <dbReference type="NCBI Taxonomy" id="522373"/>
    <lineage>
        <taxon>Bacteria</taxon>
        <taxon>Pseudomonadati</taxon>
        <taxon>Pseudomonadota</taxon>
        <taxon>Gammaproteobacteria</taxon>
        <taxon>Lysobacterales</taxon>
        <taxon>Lysobacteraceae</taxon>
        <taxon>Stenotrophomonas</taxon>
        <taxon>Stenotrophomonas maltophilia group</taxon>
    </lineage>
</organism>
<accession>B2FHZ0</accession>
<evidence type="ECO:0000255" key="1">
    <source>
        <dbReference type="HAMAP-Rule" id="MF_01346"/>
    </source>
</evidence>
<feature type="chain" id="PRO_1000143442" description="ATP synthase subunit alpha">
    <location>
        <begin position="1"/>
        <end position="515"/>
    </location>
</feature>
<feature type="binding site" evidence="1">
    <location>
        <begin position="171"/>
        <end position="178"/>
    </location>
    <ligand>
        <name>ATP</name>
        <dbReference type="ChEBI" id="CHEBI:30616"/>
    </ligand>
</feature>
<feature type="site" description="Required for activity" evidence="1">
    <location>
        <position position="375"/>
    </location>
</feature>